<reference key="1">
    <citation type="journal article" date="2010" name="J. Bacteriol.">
        <title>Genome sequence of the Fleming strain of Micrococcus luteus, a simple free-living actinobacterium.</title>
        <authorList>
            <person name="Young M."/>
            <person name="Artsatbanov V."/>
            <person name="Beller H.R."/>
            <person name="Chandra G."/>
            <person name="Chater K.F."/>
            <person name="Dover L.G."/>
            <person name="Goh E.B."/>
            <person name="Kahan T."/>
            <person name="Kaprelyants A.S."/>
            <person name="Kyrpides N."/>
            <person name="Lapidus A."/>
            <person name="Lowry S.R."/>
            <person name="Lykidis A."/>
            <person name="Mahillon J."/>
            <person name="Markowitz V."/>
            <person name="Mavromatis K."/>
            <person name="Mukamolova G.V."/>
            <person name="Oren A."/>
            <person name="Rokem J.S."/>
            <person name="Smith M.C."/>
            <person name="Young D.I."/>
            <person name="Greenblatt C.L."/>
        </authorList>
    </citation>
    <scope>NUCLEOTIDE SEQUENCE [LARGE SCALE GENOMIC DNA]</scope>
    <source>
        <strain>ATCC 4698 / DSM 20030 / JCM 1464 / CCM 169 / CCUG 5858 / IAM 1056 / NBRC 3333 / NCIMB 9278 / NCTC 2665 / VKM Ac-2230</strain>
    </source>
</reference>
<comment type="function">
    <text evidence="1">Located on the platform of the 30S subunit, it bridges several disparate RNA helices of the 16S rRNA. Forms part of the Shine-Dalgarno cleft in the 70S ribosome.</text>
</comment>
<comment type="subunit">
    <text evidence="1">Part of the 30S ribosomal subunit. Interacts with proteins S7 and S18. Binds to IF-3.</text>
</comment>
<comment type="similarity">
    <text evidence="1">Belongs to the universal ribosomal protein uS11 family.</text>
</comment>
<feature type="chain" id="PRO_1000214368" description="Small ribosomal subunit protein uS11">
    <location>
        <begin position="1"/>
        <end position="134"/>
    </location>
</feature>
<gene>
    <name evidence="1" type="primary">rpsK</name>
    <name type="ordered locus">Mlut_16910</name>
</gene>
<evidence type="ECO:0000255" key="1">
    <source>
        <dbReference type="HAMAP-Rule" id="MF_01310"/>
    </source>
</evidence>
<evidence type="ECO:0000305" key="2"/>
<protein>
    <recommendedName>
        <fullName evidence="1">Small ribosomal subunit protein uS11</fullName>
    </recommendedName>
    <alternativeName>
        <fullName evidence="2">30S ribosomal protein S11</fullName>
    </alternativeName>
</protein>
<accession>C5CC37</accession>
<proteinExistence type="inferred from homology"/>
<organism>
    <name type="scientific">Micrococcus luteus (strain ATCC 4698 / DSM 20030 / JCM 1464 / CCM 169 / CCUG 5858 / IAM 1056 / NBRC 3333 / NCIMB 9278 / NCTC 2665 / VKM Ac-2230)</name>
    <name type="common">Micrococcus lysodeikticus</name>
    <dbReference type="NCBI Taxonomy" id="465515"/>
    <lineage>
        <taxon>Bacteria</taxon>
        <taxon>Bacillati</taxon>
        <taxon>Actinomycetota</taxon>
        <taxon>Actinomycetes</taxon>
        <taxon>Micrococcales</taxon>
        <taxon>Micrococcaceae</taxon>
        <taxon>Micrococcus</taxon>
    </lineage>
</organism>
<dbReference type="EMBL" id="CP001628">
    <property type="protein sequence ID" value="ACS31178.1"/>
    <property type="molecule type" value="Genomic_DNA"/>
</dbReference>
<dbReference type="RefSeq" id="WP_002857513.1">
    <property type="nucleotide sequence ID" value="NZ_WBMF01000001.1"/>
</dbReference>
<dbReference type="SMR" id="C5CC37"/>
<dbReference type="STRING" id="465515.Mlut_16910"/>
<dbReference type="EnsemblBacteria" id="ACS31178">
    <property type="protein sequence ID" value="ACS31178"/>
    <property type="gene ID" value="Mlut_16910"/>
</dbReference>
<dbReference type="GeneID" id="93364295"/>
<dbReference type="KEGG" id="mlu:Mlut_16910"/>
<dbReference type="eggNOG" id="COG0100">
    <property type="taxonomic scope" value="Bacteria"/>
</dbReference>
<dbReference type="HOGENOM" id="CLU_072439_5_0_11"/>
<dbReference type="Proteomes" id="UP000000738">
    <property type="component" value="Chromosome"/>
</dbReference>
<dbReference type="GO" id="GO:1990904">
    <property type="term" value="C:ribonucleoprotein complex"/>
    <property type="evidence" value="ECO:0007669"/>
    <property type="project" value="UniProtKB-KW"/>
</dbReference>
<dbReference type="GO" id="GO:0005840">
    <property type="term" value="C:ribosome"/>
    <property type="evidence" value="ECO:0007669"/>
    <property type="project" value="UniProtKB-KW"/>
</dbReference>
<dbReference type="GO" id="GO:0019843">
    <property type="term" value="F:rRNA binding"/>
    <property type="evidence" value="ECO:0007669"/>
    <property type="project" value="UniProtKB-UniRule"/>
</dbReference>
<dbReference type="GO" id="GO:0003735">
    <property type="term" value="F:structural constituent of ribosome"/>
    <property type="evidence" value="ECO:0007669"/>
    <property type="project" value="InterPro"/>
</dbReference>
<dbReference type="GO" id="GO:0006412">
    <property type="term" value="P:translation"/>
    <property type="evidence" value="ECO:0007669"/>
    <property type="project" value="UniProtKB-UniRule"/>
</dbReference>
<dbReference type="FunFam" id="3.30.420.80:FF:000001">
    <property type="entry name" value="30S ribosomal protein S11"/>
    <property type="match status" value="1"/>
</dbReference>
<dbReference type="Gene3D" id="3.30.420.80">
    <property type="entry name" value="Ribosomal protein S11"/>
    <property type="match status" value="1"/>
</dbReference>
<dbReference type="HAMAP" id="MF_01310">
    <property type="entry name" value="Ribosomal_uS11"/>
    <property type="match status" value="1"/>
</dbReference>
<dbReference type="InterPro" id="IPR001971">
    <property type="entry name" value="Ribosomal_uS11"/>
</dbReference>
<dbReference type="InterPro" id="IPR019981">
    <property type="entry name" value="Ribosomal_uS11_bac-type"/>
</dbReference>
<dbReference type="InterPro" id="IPR018102">
    <property type="entry name" value="Ribosomal_uS11_CS"/>
</dbReference>
<dbReference type="InterPro" id="IPR036967">
    <property type="entry name" value="Ribosomal_uS11_sf"/>
</dbReference>
<dbReference type="NCBIfam" id="NF003698">
    <property type="entry name" value="PRK05309.1"/>
    <property type="match status" value="1"/>
</dbReference>
<dbReference type="NCBIfam" id="TIGR03632">
    <property type="entry name" value="uS11_bact"/>
    <property type="match status" value="1"/>
</dbReference>
<dbReference type="PANTHER" id="PTHR11759">
    <property type="entry name" value="40S RIBOSOMAL PROTEIN S14/30S RIBOSOMAL PROTEIN S11"/>
    <property type="match status" value="1"/>
</dbReference>
<dbReference type="Pfam" id="PF00411">
    <property type="entry name" value="Ribosomal_S11"/>
    <property type="match status" value="1"/>
</dbReference>
<dbReference type="PIRSF" id="PIRSF002131">
    <property type="entry name" value="Ribosomal_S11"/>
    <property type="match status" value="1"/>
</dbReference>
<dbReference type="SUPFAM" id="SSF53137">
    <property type="entry name" value="Translational machinery components"/>
    <property type="match status" value="1"/>
</dbReference>
<dbReference type="PROSITE" id="PS00054">
    <property type="entry name" value="RIBOSOMAL_S11"/>
    <property type="match status" value="1"/>
</dbReference>
<sequence>MPPKTRASAARKPRRKANKNITVGQAHIKSTFNNTIVSITDTTGAVISWASSGEVGFKGSRKSTPYAAQMAAEQAAKRAQEHGMKKVDVFVKGPGSGRETAIRSLQAAGLEVGSIQDVTPMAHNGARPAKRRRV</sequence>
<keyword id="KW-1185">Reference proteome</keyword>
<keyword id="KW-0687">Ribonucleoprotein</keyword>
<keyword id="KW-0689">Ribosomal protein</keyword>
<keyword id="KW-0694">RNA-binding</keyword>
<keyword id="KW-0699">rRNA-binding</keyword>
<name>RS11_MICLC</name>